<sequence length="97" mass="11097">MENNISNVRIHLHRKCDVNEQDIYGKTALHYAYTKRNIDIIKILLKCPGIKICIKDNDDYTPVDLICSTISSYIASSLENKIDEVDKLGETPHYENG</sequence>
<gene>
    <name type="ordered locus">RBE_0357</name>
</gene>
<accession>Q1RJM6</accession>
<protein>
    <recommendedName>
        <fullName>Putative ankyrin repeat protein RBE_0357</fullName>
    </recommendedName>
</protein>
<feature type="chain" id="PRO_0000280910" description="Putative ankyrin repeat protein RBE_0357">
    <location>
        <begin position="1"/>
        <end position="97"/>
    </location>
</feature>
<feature type="repeat" description="ANK">
    <location>
        <begin position="24"/>
        <end position="54"/>
    </location>
</feature>
<proteinExistence type="predicted"/>
<reference key="1">
    <citation type="journal article" date="2006" name="PLoS Genet.">
        <title>Genome sequence of Rickettsia bellii illuminates the role of amoebae in gene exchanges between intracellular pathogens.</title>
        <authorList>
            <person name="Ogata H."/>
            <person name="La Scola B."/>
            <person name="Audic S."/>
            <person name="Renesto P."/>
            <person name="Blanc G."/>
            <person name="Robert C."/>
            <person name="Fournier P.-E."/>
            <person name="Claverie J.-M."/>
            <person name="Raoult D."/>
        </authorList>
    </citation>
    <scope>NUCLEOTIDE SEQUENCE [LARGE SCALE GENOMIC DNA]</scope>
    <source>
        <strain>RML369-C</strain>
    </source>
</reference>
<name>Y357_RICBR</name>
<dbReference type="EMBL" id="CP000087">
    <property type="protein sequence ID" value="ABE04438.1"/>
    <property type="molecule type" value="Genomic_DNA"/>
</dbReference>
<dbReference type="RefSeq" id="WP_011477047.1">
    <property type="nucleotide sequence ID" value="NC_007940.1"/>
</dbReference>
<dbReference type="SMR" id="Q1RJM6"/>
<dbReference type="KEGG" id="rbe:RBE_0357"/>
<dbReference type="HOGENOM" id="CLU_174047_0_0_5"/>
<dbReference type="Proteomes" id="UP000001951">
    <property type="component" value="Chromosome"/>
</dbReference>
<dbReference type="Gene3D" id="1.25.40.20">
    <property type="entry name" value="Ankyrin repeat-containing domain"/>
    <property type="match status" value="1"/>
</dbReference>
<dbReference type="InterPro" id="IPR002110">
    <property type="entry name" value="Ankyrin_rpt"/>
</dbReference>
<dbReference type="InterPro" id="IPR036770">
    <property type="entry name" value="Ankyrin_rpt-contain_sf"/>
</dbReference>
<dbReference type="Pfam" id="PF12796">
    <property type="entry name" value="Ank_2"/>
    <property type="match status" value="1"/>
</dbReference>
<dbReference type="SUPFAM" id="SSF48403">
    <property type="entry name" value="Ankyrin repeat"/>
    <property type="match status" value="1"/>
</dbReference>
<dbReference type="PROSITE" id="PS50297">
    <property type="entry name" value="ANK_REP_REGION"/>
    <property type="match status" value="1"/>
</dbReference>
<dbReference type="PROSITE" id="PS50088">
    <property type="entry name" value="ANK_REPEAT"/>
    <property type="match status" value="1"/>
</dbReference>
<keyword id="KW-0040">ANK repeat</keyword>
<organism>
    <name type="scientific">Rickettsia bellii (strain RML369-C)</name>
    <dbReference type="NCBI Taxonomy" id="336407"/>
    <lineage>
        <taxon>Bacteria</taxon>
        <taxon>Pseudomonadati</taxon>
        <taxon>Pseudomonadota</taxon>
        <taxon>Alphaproteobacteria</taxon>
        <taxon>Rickettsiales</taxon>
        <taxon>Rickettsiaceae</taxon>
        <taxon>Rickettsieae</taxon>
        <taxon>Rickettsia</taxon>
        <taxon>belli group</taxon>
    </lineage>
</organism>